<evidence type="ECO:0000255" key="1"/>
<evidence type="ECO:0000305" key="2"/>
<organism>
    <name type="scientific">Staphylococcus aureus (strain MW2)</name>
    <dbReference type="NCBI Taxonomy" id="196620"/>
    <lineage>
        <taxon>Bacteria</taxon>
        <taxon>Bacillati</taxon>
        <taxon>Bacillota</taxon>
        <taxon>Bacilli</taxon>
        <taxon>Bacillales</taxon>
        <taxon>Staphylococcaceae</taxon>
        <taxon>Staphylococcus</taxon>
    </lineage>
</organism>
<accession>Q8NUV7</accession>
<reference key="1">
    <citation type="journal article" date="2002" name="Lancet">
        <title>Genome and virulence determinants of high virulence community-acquired MRSA.</title>
        <authorList>
            <person name="Baba T."/>
            <person name="Takeuchi F."/>
            <person name="Kuroda M."/>
            <person name="Yuzawa H."/>
            <person name="Aoki K."/>
            <person name="Oguchi A."/>
            <person name="Nagai Y."/>
            <person name="Iwama N."/>
            <person name="Asano K."/>
            <person name="Naimi T."/>
            <person name="Kuroda H."/>
            <person name="Cui L."/>
            <person name="Yamamoto K."/>
            <person name="Hiramatsu K."/>
        </authorList>
    </citation>
    <scope>NUCLEOTIDE SEQUENCE [LARGE SCALE GENOMIC DNA]</scope>
    <source>
        <strain>MW2</strain>
    </source>
</reference>
<name>Y2407_STAAW</name>
<sequence>MMHSKKLTLGICLVLLIILIVGYVIMTKANGQNAQIKDTFNQTLKLYPTKNLDDFYDKEGFRDQEFKKGDKGTWIVNSGMNIQLKGGALKSREMVLYINRNTRKTKGYFIVGEITKDKKGYTHDKDKKYPVKMEHNKIIPTKPIKDEKLKKEIENFKFFVQYGNFKDFKDYKNGDISYNPNVPSYSAKYQLSNDDYNIQQLRKRYDIPTKKAPELLLKGDGDLKGSSIGSKDLEFTFVQNKRENIYFTDSVEFTPSEDTSYESN</sequence>
<comment type="subcellular location">
    <subcellularLocation>
        <location evidence="2">Cell membrane</location>
        <topology evidence="2">Single-pass membrane protein</topology>
    </subcellularLocation>
</comment>
<comment type="similarity">
    <text evidence="2">Belongs to the staphylococcal tandem lipoprotein family.</text>
</comment>
<comment type="sequence caution" evidence="2">
    <conflict type="erroneous initiation">
        <sequence resource="EMBL-CDS" id="BAB96272"/>
    </conflict>
</comment>
<keyword id="KW-1003">Cell membrane</keyword>
<keyword id="KW-0472">Membrane</keyword>
<keyword id="KW-0812">Transmembrane</keyword>
<keyword id="KW-1133">Transmembrane helix</keyword>
<dbReference type="EMBL" id="BA000033">
    <property type="protein sequence ID" value="BAB96272.1"/>
    <property type="status" value="ALT_INIT"/>
    <property type="molecule type" value="Genomic_DNA"/>
</dbReference>
<dbReference type="RefSeq" id="WP_000972283.1">
    <property type="nucleotide sequence ID" value="NC_003923.1"/>
</dbReference>
<dbReference type="SMR" id="Q8NUV7"/>
<dbReference type="KEGG" id="sam:MW2407"/>
<dbReference type="HOGENOM" id="CLU_071589_0_1_9"/>
<dbReference type="GO" id="GO:0005886">
    <property type="term" value="C:plasma membrane"/>
    <property type="evidence" value="ECO:0007669"/>
    <property type="project" value="UniProtKB-SubCell"/>
</dbReference>
<dbReference type="Gene3D" id="2.50.20.40">
    <property type="match status" value="1"/>
</dbReference>
<dbReference type="InterPro" id="IPR007595">
    <property type="entry name" value="Csa"/>
</dbReference>
<dbReference type="InterPro" id="IPR038641">
    <property type="entry name" value="Csa_sf"/>
</dbReference>
<dbReference type="NCBIfam" id="TIGR01742">
    <property type="entry name" value="SA_tandem_lipo"/>
    <property type="match status" value="1"/>
</dbReference>
<dbReference type="Pfam" id="PF04507">
    <property type="entry name" value="DUF576"/>
    <property type="match status" value="1"/>
</dbReference>
<proteinExistence type="inferred from homology"/>
<protein>
    <recommendedName>
        <fullName>Uncharacterized protein MW2407</fullName>
    </recommendedName>
</protein>
<gene>
    <name type="ordered locus">MW2407</name>
</gene>
<feature type="chain" id="PRO_0000282177" description="Uncharacterized protein MW2407">
    <location>
        <begin position="1"/>
        <end position="264"/>
    </location>
</feature>
<feature type="transmembrane region" description="Helical" evidence="1">
    <location>
        <begin position="7"/>
        <end position="27"/>
    </location>
</feature>